<feature type="chain" id="PRO_1000131617" description="Uronate isomerase">
    <location>
        <begin position="1"/>
        <end position="469"/>
    </location>
</feature>
<sequence length="469" mass="53475">MSQFLTEDFLLDTEFARRLYHDYAKDQPIFDYHCHLPPEQIAENYRFKNMYDIWLKGDHYKWRAMRTNGVAERLCTGDASDREKFDAWAATVPHTIGNPLYHWTHLELRRPFGITGKLLSPATSEEIWQRGNELLAQDPFSARGIMQQMNVKMVGTTDDPIDDLRHHKAIAADGSFNIKVLPSWRPDKAFNIEAAGFNDYMQRLEAAADTSISRFADLCVALNKRMDHFAAHGCKVSDHALDVVVYGEADETTLDAILARRLAGNQPSTEEIAQFKTAVLLFLSGEYHRREWVQQYHIGALRNNNSRMFNLVGPDIGFDSINDQPLAQPLSRLLDAQGLRNALPKTILYCLNPRDNEVIGTMVGNFQGEGEAGKMQFGSGWWFNDQKDGMQRQMTQLAQLGLLSRFVGMLTDSRSFLSYTRHEYFRRILCQMIGRWVADGEAPADIALLGAMVKNICFDNAQQYFAIEL</sequence>
<accession>A9R1P0</accession>
<name>UXAC_YERPG</name>
<organism>
    <name type="scientific">Yersinia pestis bv. Antiqua (strain Angola)</name>
    <dbReference type="NCBI Taxonomy" id="349746"/>
    <lineage>
        <taxon>Bacteria</taxon>
        <taxon>Pseudomonadati</taxon>
        <taxon>Pseudomonadota</taxon>
        <taxon>Gammaproteobacteria</taxon>
        <taxon>Enterobacterales</taxon>
        <taxon>Yersiniaceae</taxon>
        <taxon>Yersinia</taxon>
    </lineage>
</organism>
<gene>
    <name evidence="1" type="primary">uxaC</name>
    <name type="ordered locus">YpAngola_A1104</name>
</gene>
<proteinExistence type="inferred from homology"/>
<comment type="catalytic activity">
    <reaction evidence="1">
        <text>D-glucuronate = D-fructuronate</text>
        <dbReference type="Rhea" id="RHEA:13049"/>
        <dbReference type="ChEBI" id="CHEBI:58720"/>
        <dbReference type="ChEBI" id="CHEBI:59863"/>
        <dbReference type="EC" id="5.3.1.12"/>
    </reaction>
</comment>
<comment type="catalytic activity">
    <reaction evidence="1">
        <text>aldehydo-D-galacturonate = keto-D-tagaturonate</text>
        <dbReference type="Rhea" id="RHEA:27702"/>
        <dbReference type="ChEBI" id="CHEBI:12952"/>
        <dbReference type="ChEBI" id="CHEBI:17886"/>
        <dbReference type="EC" id="5.3.1.12"/>
    </reaction>
</comment>
<comment type="pathway">
    <text evidence="1">Carbohydrate metabolism; pentose and glucuronate interconversion.</text>
</comment>
<comment type="similarity">
    <text evidence="1">Belongs to the metallo-dependent hydrolases superfamily. Uronate isomerase family.</text>
</comment>
<dbReference type="EC" id="5.3.1.12" evidence="1"/>
<dbReference type="EMBL" id="CP000901">
    <property type="protein sequence ID" value="ABX86762.1"/>
    <property type="molecule type" value="Genomic_DNA"/>
</dbReference>
<dbReference type="RefSeq" id="WP_002210410.1">
    <property type="nucleotide sequence ID" value="NZ_CP009935.1"/>
</dbReference>
<dbReference type="SMR" id="A9R1P0"/>
<dbReference type="GeneID" id="57974037"/>
<dbReference type="KEGG" id="ypg:YpAngola_A1104"/>
<dbReference type="PATRIC" id="fig|349746.12.peg.2055"/>
<dbReference type="UniPathway" id="UPA00246"/>
<dbReference type="GO" id="GO:0008880">
    <property type="term" value="F:glucuronate isomerase activity"/>
    <property type="evidence" value="ECO:0007669"/>
    <property type="project" value="UniProtKB-UniRule"/>
</dbReference>
<dbReference type="GO" id="GO:0019698">
    <property type="term" value="P:D-galacturonate catabolic process"/>
    <property type="evidence" value="ECO:0007669"/>
    <property type="project" value="TreeGrafter"/>
</dbReference>
<dbReference type="GO" id="GO:0042840">
    <property type="term" value="P:D-glucuronate catabolic process"/>
    <property type="evidence" value="ECO:0007669"/>
    <property type="project" value="TreeGrafter"/>
</dbReference>
<dbReference type="Gene3D" id="3.20.20.140">
    <property type="entry name" value="Metal-dependent hydrolases"/>
    <property type="match status" value="1"/>
</dbReference>
<dbReference type="Gene3D" id="1.10.2020.10">
    <property type="entry name" value="uronate isomerase, domain 2, chain A"/>
    <property type="match status" value="1"/>
</dbReference>
<dbReference type="HAMAP" id="MF_00675">
    <property type="entry name" value="UxaC"/>
    <property type="match status" value="1"/>
</dbReference>
<dbReference type="InterPro" id="IPR032466">
    <property type="entry name" value="Metal_Hydrolase"/>
</dbReference>
<dbReference type="InterPro" id="IPR003766">
    <property type="entry name" value="Uronate_isomerase"/>
</dbReference>
<dbReference type="NCBIfam" id="NF002794">
    <property type="entry name" value="PRK02925.1"/>
    <property type="match status" value="1"/>
</dbReference>
<dbReference type="PANTHER" id="PTHR30068">
    <property type="entry name" value="URONATE ISOMERASE"/>
    <property type="match status" value="1"/>
</dbReference>
<dbReference type="PANTHER" id="PTHR30068:SF4">
    <property type="entry name" value="URONATE ISOMERASE"/>
    <property type="match status" value="1"/>
</dbReference>
<dbReference type="Pfam" id="PF02614">
    <property type="entry name" value="UxaC"/>
    <property type="match status" value="1"/>
</dbReference>
<dbReference type="SUPFAM" id="SSF51556">
    <property type="entry name" value="Metallo-dependent hydrolases"/>
    <property type="match status" value="1"/>
</dbReference>
<reference key="1">
    <citation type="journal article" date="2010" name="J. Bacteriol.">
        <title>Genome sequence of the deep-rooted Yersinia pestis strain Angola reveals new insights into the evolution and pangenome of the plague bacterium.</title>
        <authorList>
            <person name="Eppinger M."/>
            <person name="Worsham P.L."/>
            <person name="Nikolich M.P."/>
            <person name="Riley D.R."/>
            <person name="Sebastian Y."/>
            <person name="Mou S."/>
            <person name="Achtman M."/>
            <person name="Lindler L.E."/>
            <person name="Ravel J."/>
        </authorList>
    </citation>
    <scope>NUCLEOTIDE SEQUENCE [LARGE SCALE GENOMIC DNA]</scope>
    <source>
        <strain>Angola</strain>
    </source>
</reference>
<protein>
    <recommendedName>
        <fullName evidence="1">Uronate isomerase</fullName>
        <ecNumber evidence="1">5.3.1.12</ecNumber>
    </recommendedName>
    <alternativeName>
        <fullName evidence="1">Glucuronate isomerase</fullName>
    </alternativeName>
    <alternativeName>
        <fullName evidence="1">Uronic isomerase</fullName>
    </alternativeName>
</protein>
<keyword id="KW-0413">Isomerase</keyword>
<evidence type="ECO:0000255" key="1">
    <source>
        <dbReference type="HAMAP-Rule" id="MF_00675"/>
    </source>
</evidence>